<name>PXPA_STAAC</name>
<reference key="1">
    <citation type="journal article" date="2005" name="J. Bacteriol.">
        <title>Insights on evolution of virulence and resistance from the complete genome analysis of an early methicillin-resistant Staphylococcus aureus strain and a biofilm-producing methicillin-resistant Staphylococcus epidermidis strain.</title>
        <authorList>
            <person name="Gill S.R."/>
            <person name="Fouts D.E."/>
            <person name="Archer G.L."/>
            <person name="Mongodin E.F."/>
            <person name="DeBoy R.T."/>
            <person name="Ravel J."/>
            <person name="Paulsen I.T."/>
            <person name="Kolonay J.F."/>
            <person name="Brinkac L.M."/>
            <person name="Beanan M.J."/>
            <person name="Dodson R.J."/>
            <person name="Daugherty S.C."/>
            <person name="Madupu R."/>
            <person name="Angiuoli S.V."/>
            <person name="Durkin A.S."/>
            <person name="Haft D.H."/>
            <person name="Vamathevan J.J."/>
            <person name="Khouri H."/>
            <person name="Utterback T.R."/>
            <person name="Lee C."/>
            <person name="Dimitrov G."/>
            <person name="Jiang L."/>
            <person name="Qin H."/>
            <person name="Weidman J."/>
            <person name="Tran K."/>
            <person name="Kang K.H."/>
            <person name="Hance I.R."/>
            <person name="Nelson K.E."/>
            <person name="Fraser C.M."/>
        </authorList>
    </citation>
    <scope>NUCLEOTIDE SEQUENCE [LARGE SCALE GENOMIC DNA]</scope>
    <source>
        <strain>COL</strain>
    </source>
</reference>
<comment type="function">
    <text evidence="1">Catalyzes the cleavage of 5-oxoproline to form L-glutamate coupled to the hydrolysis of ATP to ADP and inorganic phosphate.</text>
</comment>
<comment type="catalytic activity">
    <reaction evidence="1">
        <text>5-oxo-L-proline + ATP + 2 H2O = L-glutamate + ADP + phosphate + H(+)</text>
        <dbReference type="Rhea" id="RHEA:10348"/>
        <dbReference type="ChEBI" id="CHEBI:15377"/>
        <dbReference type="ChEBI" id="CHEBI:15378"/>
        <dbReference type="ChEBI" id="CHEBI:29985"/>
        <dbReference type="ChEBI" id="CHEBI:30616"/>
        <dbReference type="ChEBI" id="CHEBI:43474"/>
        <dbReference type="ChEBI" id="CHEBI:58402"/>
        <dbReference type="ChEBI" id="CHEBI:456216"/>
        <dbReference type="EC" id="3.5.2.9"/>
    </reaction>
</comment>
<comment type="subunit">
    <text evidence="1">Forms a complex composed of PxpA, PxpB and PxpC.</text>
</comment>
<comment type="similarity">
    <text evidence="1">Belongs to the LamB/PxpA family.</text>
</comment>
<dbReference type="EC" id="3.5.2.9" evidence="1"/>
<dbReference type="EMBL" id="CP000046">
    <property type="protein sequence ID" value="AAW38276.1"/>
    <property type="molecule type" value="Genomic_DNA"/>
</dbReference>
<dbReference type="RefSeq" id="WP_001261795.1">
    <property type="nucleotide sequence ID" value="NZ_JBGOFO010000003.1"/>
</dbReference>
<dbReference type="SMR" id="Q5HFF7"/>
<dbReference type="KEGG" id="sac:SACOL1660"/>
<dbReference type="HOGENOM" id="CLU_069535_0_0_9"/>
<dbReference type="Proteomes" id="UP000000530">
    <property type="component" value="Chromosome"/>
</dbReference>
<dbReference type="GO" id="GO:0017168">
    <property type="term" value="F:5-oxoprolinase (ATP-hydrolyzing) activity"/>
    <property type="evidence" value="ECO:0007669"/>
    <property type="project" value="UniProtKB-UniRule"/>
</dbReference>
<dbReference type="GO" id="GO:0005524">
    <property type="term" value="F:ATP binding"/>
    <property type="evidence" value="ECO:0007669"/>
    <property type="project" value="UniProtKB-UniRule"/>
</dbReference>
<dbReference type="GO" id="GO:0005975">
    <property type="term" value="P:carbohydrate metabolic process"/>
    <property type="evidence" value="ECO:0007669"/>
    <property type="project" value="InterPro"/>
</dbReference>
<dbReference type="CDD" id="cd10787">
    <property type="entry name" value="LamB_YcsF_like"/>
    <property type="match status" value="1"/>
</dbReference>
<dbReference type="Gene3D" id="3.20.20.370">
    <property type="entry name" value="Glycoside hydrolase/deacetylase"/>
    <property type="match status" value="1"/>
</dbReference>
<dbReference type="HAMAP" id="MF_00691">
    <property type="entry name" value="PxpA"/>
    <property type="match status" value="1"/>
</dbReference>
<dbReference type="InterPro" id="IPR011330">
    <property type="entry name" value="Glyco_hydro/deAcase_b/a-brl"/>
</dbReference>
<dbReference type="InterPro" id="IPR005501">
    <property type="entry name" value="LamB/YcsF/PxpA-like"/>
</dbReference>
<dbReference type="NCBIfam" id="NF003813">
    <property type="entry name" value="PRK05406.1-2"/>
    <property type="match status" value="1"/>
</dbReference>
<dbReference type="NCBIfam" id="NF003814">
    <property type="entry name" value="PRK05406.1-3"/>
    <property type="match status" value="1"/>
</dbReference>
<dbReference type="NCBIfam" id="NF003816">
    <property type="entry name" value="PRK05406.1-5"/>
    <property type="match status" value="1"/>
</dbReference>
<dbReference type="PANTHER" id="PTHR30292:SF0">
    <property type="entry name" value="5-OXOPROLINASE SUBUNIT A"/>
    <property type="match status" value="1"/>
</dbReference>
<dbReference type="PANTHER" id="PTHR30292">
    <property type="entry name" value="UNCHARACTERIZED PROTEIN YBGL-RELATED"/>
    <property type="match status" value="1"/>
</dbReference>
<dbReference type="Pfam" id="PF03746">
    <property type="entry name" value="LamB_YcsF"/>
    <property type="match status" value="1"/>
</dbReference>
<dbReference type="SUPFAM" id="SSF88713">
    <property type="entry name" value="Glycoside hydrolase/deacetylase"/>
    <property type="match status" value="1"/>
</dbReference>
<proteinExistence type="inferred from homology"/>
<keyword id="KW-0067">ATP-binding</keyword>
<keyword id="KW-0378">Hydrolase</keyword>
<keyword id="KW-0547">Nucleotide-binding</keyword>
<feature type="chain" id="PRO_0000185043" description="5-oxoprolinase subunit A">
    <location>
        <begin position="1"/>
        <end position="250"/>
    </location>
</feature>
<sequence>MRVDLNCDLGEAFGNYSFGGDHQIIPLITSANVACGFHAGDENVMNETVKLAKAHNVAVGAHPGLPDLKGFGRRNIDISNDEIYNLMIYQLGALQGFCRIHQVKINHVKPHGALYQMGAKDREIANVIAQAVYDFDPSLVLVGLANSYLISEAKNVGLITASEVFADRRYEDDGQLVSRKESDAVITDTDEALKQVLKMVKENKVISKNNKEVTLQADTICVHGDGEHALLFVSKIREILMKEGIDIQSL</sequence>
<organism>
    <name type="scientific">Staphylococcus aureus (strain COL)</name>
    <dbReference type="NCBI Taxonomy" id="93062"/>
    <lineage>
        <taxon>Bacteria</taxon>
        <taxon>Bacillati</taxon>
        <taxon>Bacillota</taxon>
        <taxon>Bacilli</taxon>
        <taxon>Bacillales</taxon>
        <taxon>Staphylococcaceae</taxon>
        <taxon>Staphylococcus</taxon>
    </lineage>
</organism>
<gene>
    <name evidence="1" type="primary">pxpA</name>
    <name type="ordered locus">SACOL1660</name>
</gene>
<protein>
    <recommendedName>
        <fullName evidence="1">5-oxoprolinase subunit A</fullName>
        <shortName evidence="1">5-OPase subunit A</shortName>
        <ecNumber evidence="1">3.5.2.9</ecNumber>
    </recommendedName>
    <alternativeName>
        <fullName evidence="1">5-oxoprolinase (ATP-hydrolyzing) subunit A</fullName>
    </alternativeName>
</protein>
<accession>Q5HFF7</accession>
<evidence type="ECO:0000255" key="1">
    <source>
        <dbReference type="HAMAP-Rule" id="MF_00691"/>
    </source>
</evidence>